<gene>
    <name evidence="1" type="primary">ndk</name>
    <name type="ordered locus">EcolC_1159</name>
</gene>
<evidence type="ECO:0000255" key="1">
    <source>
        <dbReference type="HAMAP-Rule" id="MF_00451"/>
    </source>
</evidence>
<keyword id="KW-0067">ATP-binding</keyword>
<keyword id="KW-0963">Cytoplasm</keyword>
<keyword id="KW-0418">Kinase</keyword>
<keyword id="KW-0460">Magnesium</keyword>
<keyword id="KW-0479">Metal-binding</keyword>
<keyword id="KW-0546">Nucleotide metabolism</keyword>
<keyword id="KW-0547">Nucleotide-binding</keyword>
<keyword id="KW-0597">Phosphoprotein</keyword>
<keyword id="KW-0808">Transferase</keyword>
<sequence>MAIERTFSIIKPNAVAKNVIGNIFARFEAAGFKIVGTKMLHLTVEQARGFYAEHDGKPFFDGLVEFMTSGPIVVSVLEGENAVQRHRDLLGATNPANALAGTLRADYADSLTENGTHGSDSVESAAREIAYFFGEGEVCPRTR</sequence>
<protein>
    <recommendedName>
        <fullName evidence="1">Nucleoside diphosphate kinase</fullName>
        <shortName evidence="1">NDK</shortName>
        <shortName evidence="1">NDP kinase</shortName>
        <ecNumber evidence="1">2.7.4.6</ecNumber>
    </recommendedName>
    <alternativeName>
        <fullName evidence="1">Nucleoside-2-P kinase</fullName>
    </alternativeName>
</protein>
<comment type="function">
    <text evidence="1">Major role in the synthesis of nucleoside triphosphates other than ATP. The ATP gamma phosphate is transferred to the NDP beta phosphate via a ping-pong mechanism, using a phosphorylated active-site intermediate.</text>
</comment>
<comment type="catalytic activity">
    <reaction evidence="1">
        <text>a 2'-deoxyribonucleoside 5'-diphosphate + ATP = a 2'-deoxyribonucleoside 5'-triphosphate + ADP</text>
        <dbReference type="Rhea" id="RHEA:44640"/>
        <dbReference type="ChEBI" id="CHEBI:30616"/>
        <dbReference type="ChEBI" id="CHEBI:61560"/>
        <dbReference type="ChEBI" id="CHEBI:73316"/>
        <dbReference type="ChEBI" id="CHEBI:456216"/>
        <dbReference type="EC" id="2.7.4.6"/>
    </reaction>
</comment>
<comment type="catalytic activity">
    <reaction evidence="1">
        <text>a ribonucleoside 5'-diphosphate + ATP = a ribonucleoside 5'-triphosphate + ADP</text>
        <dbReference type="Rhea" id="RHEA:18113"/>
        <dbReference type="ChEBI" id="CHEBI:30616"/>
        <dbReference type="ChEBI" id="CHEBI:57930"/>
        <dbReference type="ChEBI" id="CHEBI:61557"/>
        <dbReference type="ChEBI" id="CHEBI:456216"/>
        <dbReference type="EC" id="2.7.4.6"/>
    </reaction>
</comment>
<comment type="cofactor">
    <cofactor evidence="1">
        <name>Mg(2+)</name>
        <dbReference type="ChEBI" id="CHEBI:18420"/>
    </cofactor>
</comment>
<comment type="subunit">
    <text evidence="1">Homotetramer.</text>
</comment>
<comment type="subcellular location">
    <subcellularLocation>
        <location evidence="1">Cytoplasm</location>
    </subcellularLocation>
</comment>
<comment type="similarity">
    <text evidence="1">Belongs to the NDK family.</text>
</comment>
<accession>B1IWE3</accession>
<reference key="1">
    <citation type="submission" date="2008-02" db="EMBL/GenBank/DDBJ databases">
        <title>Complete sequence of Escherichia coli C str. ATCC 8739.</title>
        <authorList>
            <person name="Copeland A."/>
            <person name="Lucas S."/>
            <person name="Lapidus A."/>
            <person name="Glavina del Rio T."/>
            <person name="Dalin E."/>
            <person name="Tice H."/>
            <person name="Bruce D."/>
            <person name="Goodwin L."/>
            <person name="Pitluck S."/>
            <person name="Kiss H."/>
            <person name="Brettin T."/>
            <person name="Detter J.C."/>
            <person name="Han C."/>
            <person name="Kuske C.R."/>
            <person name="Schmutz J."/>
            <person name="Larimer F."/>
            <person name="Land M."/>
            <person name="Hauser L."/>
            <person name="Kyrpides N."/>
            <person name="Mikhailova N."/>
            <person name="Ingram L."/>
            <person name="Richardson P."/>
        </authorList>
    </citation>
    <scope>NUCLEOTIDE SEQUENCE [LARGE SCALE GENOMIC DNA]</scope>
    <source>
        <strain>ATCC 8739 / DSM 1576 / NBRC 3972 / NCIMB 8545 / WDCM 00012 / Crooks</strain>
    </source>
</reference>
<feature type="chain" id="PRO_1000080962" description="Nucleoside diphosphate kinase">
    <location>
        <begin position="1"/>
        <end position="143"/>
    </location>
</feature>
<feature type="active site" description="Pros-phosphohistidine intermediate" evidence="1">
    <location>
        <position position="117"/>
    </location>
</feature>
<feature type="binding site" evidence="1">
    <location>
        <position position="11"/>
    </location>
    <ligand>
        <name>ATP</name>
        <dbReference type="ChEBI" id="CHEBI:30616"/>
    </ligand>
</feature>
<feature type="binding site" evidence="1">
    <location>
        <position position="59"/>
    </location>
    <ligand>
        <name>ATP</name>
        <dbReference type="ChEBI" id="CHEBI:30616"/>
    </ligand>
</feature>
<feature type="binding site" evidence="1">
    <location>
        <position position="87"/>
    </location>
    <ligand>
        <name>ATP</name>
        <dbReference type="ChEBI" id="CHEBI:30616"/>
    </ligand>
</feature>
<feature type="binding site" evidence="1">
    <location>
        <position position="93"/>
    </location>
    <ligand>
        <name>ATP</name>
        <dbReference type="ChEBI" id="CHEBI:30616"/>
    </ligand>
</feature>
<feature type="binding site" evidence="1">
    <location>
        <position position="104"/>
    </location>
    <ligand>
        <name>ATP</name>
        <dbReference type="ChEBI" id="CHEBI:30616"/>
    </ligand>
</feature>
<feature type="binding site" evidence="1">
    <location>
        <position position="114"/>
    </location>
    <ligand>
        <name>ATP</name>
        <dbReference type="ChEBI" id="CHEBI:30616"/>
    </ligand>
</feature>
<proteinExistence type="inferred from homology"/>
<name>NDK_ECOLC</name>
<dbReference type="EC" id="2.7.4.6" evidence="1"/>
<dbReference type="EMBL" id="CP000946">
    <property type="protein sequence ID" value="ACA76826.1"/>
    <property type="molecule type" value="Genomic_DNA"/>
</dbReference>
<dbReference type="RefSeq" id="WP_000963837.1">
    <property type="nucleotide sequence ID" value="NZ_MTFT01000002.1"/>
</dbReference>
<dbReference type="SMR" id="B1IWE3"/>
<dbReference type="GeneID" id="93774618"/>
<dbReference type="KEGG" id="ecl:EcolC_1159"/>
<dbReference type="HOGENOM" id="CLU_060216_8_1_6"/>
<dbReference type="GO" id="GO:0005737">
    <property type="term" value="C:cytoplasm"/>
    <property type="evidence" value="ECO:0007669"/>
    <property type="project" value="UniProtKB-SubCell"/>
</dbReference>
<dbReference type="GO" id="GO:0005524">
    <property type="term" value="F:ATP binding"/>
    <property type="evidence" value="ECO:0007669"/>
    <property type="project" value="UniProtKB-UniRule"/>
</dbReference>
<dbReference type="GO" id="GO:0046872">
    <property type="term" value="F:metal ion binding"/>
    <property type="evidence" value="ECO:0007669"/>
    <property type="project" value="UniProtKB-KW"/>
</dbReference>
<dbReference type="GO" id="GO:0004550">
    <property type="term" value="F:nucleoside diphosphate kinase activity"/>
    <property type="evidence" value="ECO:0007669"/>
    <property type="project" value="UniProtKB-UniRule"/>
</dbReference>
<dbReference type="GO" id="GO:0006241">
    <property type="term" value="P:CTP biosynthetic process"/>
    <property type="evidence" value="ECO:0007669"/>
    <property type="project" value="UniProtKB-UniRule"/>
</dbReference>
<dbReference type="GO" id="GO:0006183">
    <property type="term" value="P:GTP biosynthetic process"/>
    <property type="evidence" value="ECO:0007669"/>
    <property type="project" value="UniProtKB-UniRule"/>
</dbReference>
<dbReference type="GO" id="GO:0006228">
    <property type="term" value="P:UTP biosynthetic process"/>
    <property type="evidence" value="ECO:0007669"/>
    <property type="project" value="UniProtKB-UniRule"/>
</dbReference>
<dbReference type="CDD" id="cd04413">
    <property type="entry name" value="NDPk_I"/>
    <property type="match status" value="1"/>
</dbReference>
<dbReference type="FunFam" id="3.30.70.141:FF:000001">
    <property type="entry name" value="Nucleoside diphosphate kinase"/>
    <property type="match status" value="1"/>
</dbReference>
<dbReference type="Gene3D" id="3.30.70.141">
    <property type="entry name" value="Nucleoside diphosphate kinase-like domain"/>
    <property type="match status" value="1"/>
</dbReference>
<dbReference type="HAMAP" id="MF_00451">
    <property type="entry name" value="NDP_kinase"/>
    <property type="match status" value="1"/>
</dbReference>
<dbReference type="InterPro" id="IPR034907">
    <property type="entry name" value="NDK-like_dom"/>
</dbReference>
<dbReference type="InterPro" id="IPR036850">
    <property type="entry name" value="NDK-like_dom_sf"/>
</dbReference>
<dbReference type="InterPro" id="IPR001564">
    <property type="entry name" value="Nucleoside_diP_kinase"/>
</dbReference>
<dbReference type="InterPro" id="IPR023005">
    <property type="entry name" value="Nucleoside_diP_kinase_AS"/>
</dbReference>
<dbReference type="NCBIfam" id="NF001908">
    <property type="entry name" value="PRK00668.1"/>
    <property type="match status" value="1"/>
</dbReference>
<dbReference type="PANTHER" id="PTHR46161">
    <property type="entry name" value="NUCLEOSIDE DIPHOSPHATE KINASE"/>
    <property type="match status" value="1"/>
</dbReference>
<dbReference type="PANTHER" id="PTHR46161:SF3">
    <property type="entry name" value="NUCLEOSIDE DIPHOSPHATE KINASE DDB_G0292928-RELATED"/>
    <property type="match status" value="1"/>
</dbReference>
<dbReference type="Pfam" id="PF00334">
    <property type="entry name" value="NDK"/>
    <property type="match status" value="1"/>
</dbReference>
<dbReference type="PRINTS" id="PR01243">
    <property type="entry name" value="NUCDPKINASE"/>
</dbReference>
<dbReference type="SMART" id="SM00562">
    <property type="entry name" value="NDK"/>
    <property type="match status" value="1"/>
</dbReference>
<dbReference type="SUPFAM" id="SSF54919">
    <property type="entry name" value="Nucleoside diphosphate kinase, NDK"/>
    <property type="match status" value="1"/>
</dbReference>
<dbReference type="PROSITE" id="PS00469">
    <property type="entry name" value="NDPK"/>
    <property type="match status" value="1"/>
</dbReference>
<dbReference type="PROSITE" id="PS51374">
    <property type="entry name" value="NDPK_LIKE"/>
    <property type="match status" value="1"/>
</dbReference>
<organism>
    <name type="scientific">Escherichia coli (strain ATCC 8739 / DSM 1576 / NBRC 3972 / NCIMB 8545 / WDCM 00012 / Crooks)</name>
    <dbReference type="NCBI Taxonomy" id="481805"/>
    <lineage>
        <taxon>Bacteria</taxon>
        <taxon>Pseudomonadati</taxon>
        <taxon>Pseudomonadota</taxon>
        <taxon>Gammaproteobacteria</taxon>
        <taxon>Enterobacterales</taxon>
        <taxon>Enterobacteriaceae</taxon>
        <taxon>Escherichia</taxon>
    </lineage>
</organism>